<gene>
    <name type="primary">NXNL2</name>
    <name type="synonym">C9orf121</name>
</gene>
<keyword id="KW-0025">Alternative splicing</keyword>
<keyword id="KW-1267">Proteomics identification</keyword>
<keyword id="KW-1185">Reference proteome</keyword>
<evidence type="ECO:0000250" key="1"/>
<evidence type="ECO:0000269" key="2">
    <source>
    </source>
</evidence>
<evidence type="ECO:0000303" key="3">
    <source>
    </source>
</evidence>
<evidence type="ECO:0000305" key="4"/>
<sequence>MVDILGERHLVTCKGATVEAEAALQNKVVALYFAAARCAPSRDFTPLLCDFYTALVAEARRPAPFEVVFVSADGSSQEMLDFMRELHGAWLALPFHDPYRHELRKRYNVTAIPKLVIVKQNGEVITNKGRKQIRERGLACFQDWVEAADIFQNFSV</sequence>
<reference key="1">
    <citation type="journal article" date="2004" name="Nature">
        <title>DNA sequence and analysis of human chromosome 9.</title>
        <authorList>
            <person name="Humphray S.J."/>
            <person name="Oliver K."/>
            <person name="Hunt A.R."/>
            <person name="Plumb R.W."/>
            <person name="Loveland J.E."/>
            <person name="Howe K.L."/>
            <person name="Andrews T.D."/>
            <person name="Searle S."/>
            <person name="Hunt S.E."/>
            <person name="Scott C.E."/>
            <person name="Jones M.C."/>
            <person name="Ainscough R."/>
            <person name="Almeida J.P."/>
            <person name="Ambrose K.D."/>
            <person name="Ashwell R.I.S."/>
            <person name="Babbage A.K."/>
            <person name="Babbage S."/>
            <person name="Bagguley C.L."/>
            <person name="Bailey J."/>
            <person name="Banerjee R."/>
            <person name="Barker D.J."/>
            <person name="Barlow K.F."/>
            <person name="Bates K."/>
            <person name="Beasley H."/>
            <person name="Beasley O."/>
            <person name="Bird C.P."/>
            <person name="Bray-Allen S."/>
            <person name="Brown A.J."/>
            <person name="Brown J.Y."/>
            <person name="Burford D."/>
            <person name="Burrill W."/>
            <person name="Burton J."/>
            <person name="Carder C."/>
            <person name="Carter N.P."/>
            <person name="Chapman J.C."/>
            <person name="Chen Y."/>
            <person name="Clarke G."/>
            <person name="Clark S.Y."/>
            <person name="Clee C.M."/>
            <person name="Clegg S."/>
            <person name="Collier R.E."/>
            <person name="Corby N."/>
            <person name="Crosier M."/>
            <person name="Cummings A.T."/>
            <person name="Davies J."/>
            <person name="Dhami P."/>
            <person name="Dunn M."/>
            <person name="Dutta I."/>
            <person name="Dyer L.W."/>
            <person name="Earthrowl M.E."/>
            <person name="Faulkner L."/>
            <person name="Fleming C.J."/>
            <person name="Frankish A."/>
            <person name="Frankland J.A."/>
            <person name="French L."/>
            <person name="Fricker D.G."/>
            <person name="Garner P."/>
            <person name="Garnett J."/>
            <person name="Ghori J."/>
            <person name="Gilbert J.G.R."/>
            <person name="Glison C."/>
            <person name="Grafham D.V."/>
            <person name="Gribble S."/>
            <person name="Griffiths C."/>
            <person name="Griffiths-Jones S."/>
            <person name="Grocock R."/>
            <person name="Guy J."/>
            <person name="Hall R.E."/>
            <person name="Hammond S."/>
            <person name="Harley J.L."/>
            <person name="Harrison E.S.I."/>
            <person name="Hart E.A."/>
            <person name="Heath P.D."/>
            <person name="Henderson C.D."/>
            <person name="Hopkins B.L."/>
            <person name="Howard P.J."/>
            <person name="Howden P.J."/>
            <person name="Huckle E."/>
            <person name="Johnson C."/>
            <person name="Johnson D."/>
            <person name="Joy A.A."/>
            <person name="Kay M."/>
            <person name="Keenan S."/>
            <person name="Kershaw J.K."/>
            <person name="Kimberley A.M."/>
            <person name="King A."/>
            <person name="Knights A."/>
            <person name="Laird G.K."/>
            <person name="Langford C."/>
            <person name="Lawlor S."/>
            <person name="Leongamornlert D.A."/>
            <person name="Leversha M."/>
            <person name="Lloyd C."/>
            <person name="Lloyd D.M."/>
            <person name="Lovell J."/>
            <person name="Martin S."/>
            <person name="Mashreghi-Mohammadi M."/>
            <person name="Matthews L."/>
            <person name="McLaren S."/>
            <person name="McLay K.E."/>
            <person name="McMurray A."/>
            <person name="Milne S."/>
            <person name="Nickerson T."/>
            <person name="Nisbett J."/>
            <person name="Nordsiek G."/>
            <person name="Pearce A.V."/>
            <person name="Peck A.I."/>
            <person name="Porter K.M."/>
            <person name="Pandian R."/>
            <person name="Pelan S."/>
            <person name="Phillimore B."/>
            <person name="Povey S."/>
            <person name="Ramsey Y."/>
            <person name="Rand V."/>
            <person name="Scharfe M."/>
            <person name="Sehra H.K."/>
            <person name="Shownkeen R."/>
            <person name="Sims S.K."/>
            <person name="Skuce C.D."/>
            <person name="Smith M."/>
            <person name="Steward C.A."/>
            <person name="Swarbreck D."/>
            <person name="Sycamore N."/>
            <person name="Tester J."/>
            <person name="Thorpe A."/>
            <person name="Tracey A."/>
            <person name="Tromans A."/>
            <person name="Thomas D.W."/>
            <person name="Wall M."/>
            <person name="Wallis J.M."/>
            <person name="West A.P."/>
            <person name="Whitehead S.L."/>
            <person name="Willey D.L."/>
            <person name="Williams S.A."/>
            <person name="Wilming L."/>
            <person name="Wray P.W."/>
            <person name="Young L."/>
            <person name="Ashurst J.L."/>
            <person name="Coulson A."/>
            <person name="Blocker H."/>
            <person name="Durbin R.M."/>
            <person name="Sulston J.E."/>
            <person name="Hubbard T."/>
            <person name="Jackson M.J."/>
            <person name="Bentley D.R."/>
            <person name="Beck S."/>
            <person name="Rogers J."/>
            <person name="Dunham I."/>
        </authorList>
    </citation>
    <scope>NUCLEOTIDE SEQUENCE [LARGE SCALE GENOMIC DNA]</scope>
</reference>
<reference key="2">
    <citation type="journal article" date="2004" name="Genome Res.">
        <title>The status, quality, and expansion of the NIH full-length cDNA project: the Mammalian Gene Collection (MGC).</title>
        <authorList>
            <consortium name="The MGC Project Team"/>
        </authorList>
    </citation>
    <scope>NUCLEOTIDE SEQUENCE [LARGE SCALE MRNA] (ISOFORM 2)</scope>
    <scope>VARIANT CYS-76</scope>
    <source>
        <tissue>Brain</tissue>
    </source>
</reference>
<organism>
    <name type="scientific">Homo sapiens</name>
    <name type="common">Human</name>
    <dbReference type="NCBI Taxonomy" id="9606"/>
    <lineage>
        <taxon>Eukaryota</taxon>
        <taxon>Metazoa</taxon>
        <taxon>Chordata</taxon>
        <taxon>Craniata</taxon>
        <taxon>Vertebrata</taxon>
        <taxon>Euteleostomi</taxon>
        <taxon>Mammalia</taxon>
        <taxon>Eutheria</taxon>
        <taxon>Euarchontoglires</taxon>
        <taxon>Primates</taxon>
        <taxon>Haplorrhini</taxon>
        <taxon>Catarrhini</taxon>
        <taxon>Hominidae</taxon>
        <taxon>Homo</taxon>
    </lineage>
</organism>
<accession>Q5VZ03</accession>
<accession>B1AMD0</accession>
<accession>Q8TBG6</accession>
<dbReference type="EMBL" id="AL162729">
    <property type="status" value="NOT_ANNOTATED_CDS"/>
    <property type="molecule type" value="Genomic_DNA"/>
</dbReference>
<dbReference type="EMBL" id="AL592486">
    <property type="status" value="NOT_ANNOTATED_CDS"/>
    <property type="molecule type" value="Genomic_DNA"/>
</dbReference>
<dbReference type="EMBL" id="BC022521">
    <property type="protein sequence ID" value="AAH22521.1"/>
    <property type="molecule type" value="mRNA"/>
</dbReference>
<dbReference type="CCDS" id="CCDS55325.1">
    <molecule id="Q5VZ03-1"/>
</dbReference>
<dbReference type="CCDS" id="CCDS6679.1">
    <molecule id="Q5VZ03-3"/>
</dbReference>
<dbReference type="RefSeq" id="NP_001155097.1">
    <molecule id="Q5VZ03-1"/>
    <property type="nucleotide sequence ID" value="NM_001161625.2"/>
</dbReference>
<dbReference type="RefSeq" id="NP_660326.2">
    <molecule id="Q5VZ03-3"/>
    <property type="nucleotide sequence ID" value="NM_145283.3"/>
</dbReference>
<dbReference type="SMR" id="Q5VZ03"/>
<dbReference type="BioGRID" id="127641">
    <property type="interactions" value="7"/>
</dbReference>
<dbReference type="FunCoup" id="Q5VZ03">
    <property type="interactions" value="5"/>
</dbReference>
<dbReference type="IntAct" id="Q5VZ03">
    <property type="interactions" value="6"/>
</dbReference>
<dbReference type="STRING" id="9606.ENSP00000365014"/>
<dbReference type="PhosphoSitePlus" id="Q5VZ03"/>
<dbReference type="BioMuta" id="NXNL2"/>
<dbReference type="DMDM" id="74747736"/>
<dbReference type="PaxDb" id="9606-ENSP00000365014"/>
<dbReference type="PeptideAtlas" id="Q5VZ03"/>
<dbReference type="Antibodypedia" id="43680">
    <property type="antibodies" value="206 antibodies from 18 providers"/>
</dbReference>
<dbReference type="DNASU" id="158046"/>
<dbReference type="Ensembl" id="ENST00000375854.8">
    <molecule id="Q5VZ03-1"/>
    <property type="protein sequence ID" value="ENSP00000365014.3"/>
    <property type="gene ID" value="ENSG00000130045.17"/>
</dbReference>
<dbReference type="Ensembl" id="ENST00000375855.3">
    <molecule id="Q5VZ03-3"/>
    <property type="protein sequence ID" value="ENSP00000365015.3"/>
    <property type="gene ID" value="ENSG00000130045.17"/>
</dbReference>
<dbReference type="Ensembl" id="ENST00000649870.2">
    <molecule id="Q5VZ03-1"/>
    <property type="protein sequence ID" value="ENSP00000508470.1"/>
    <property type="gene ID" value="ENSG00000130045.17"/>
</dbReference>
<dbReference type="Ensembl" id="ENST00000707837.1">
    <molecule id="Q5VZ03-1"/>
    <property type="protein sequence ID" value="ENSP00000516996.1"/>
    <property type="gene ID" value="ENSG00000291520.1"/>
</dbReference>
<dbReference type="Ensembl" id="ENST00000707838.1">
    <molecule id="Q5VZ03-1"/>
    <property type="protein sequence ID" value="ENSP00000516997.1"/>
    <property type="gene ID" value="ENSG00000291520.1"/>
</dbReference>
<dbReference type="Ensembl" id="ENST00000707839.1">
    <molecule id="Q5VZ03-3"/>
    <property type="protein sequence ID" value="ENSP00000516998.1"/>
    <property type="gene ID" value="ENSG00000291520.1"/>
</dbReference>
<dbReference type="GeneID" id="158046"/>
<dbReference type="KEGG" id="hsa:158046"/>
<dbReference type="MANE-Select" id="ENST00000375854.8">
    <property type="protein sequence ID" value="ENSP00000365014.3"/>
    <property type="RefSeq nucleotide sequence ID" value="NM_001161625.2"/>
    <property type="RefSeq protein sequence ID" value="NP_001155097.1"/>
</dbReference>
<dbReference type="UCSC" id="uc004aqa.4">
    <molecule id="Q5VZ03-1"/>
    <property type="organism name" value="human"/>
</dbReference>
<dbReference type="AGR" id="HGNC:30482"/>
<dbReference type="CTD" id="158046"/>
<dbReference type="DisGeNET" id="158046"/>
<dbReference type="GeneCards" id="NXNL2"/>
<dbReference type="HGNC" id="HGNC:30482">
    <property type="gene designation" value="NXNL2"/>
</dbReference>
<dbReference type="HPA" id="ENSG00000130045">
    <property type="expression patterns" value="Tissue enhanced (fallopian)"/>
</dbReference>
<dbReference type="MIM" id="615299">
    <property type="type" value="gene"/>
</dbReference>
<dbReference type="neXtProt" id="NX_Q5VZ03"/>
<dbReference type="OpenTargets" id="ENSG00000130045"/>
<dbReference type="PharmGKB" id="PA162398384"/>
<dbReference type="VEuPathDB" id="HostDB:ENSG00000130045"/>
<dbReference type="eggNOG" id="KOG2501">
    <property type="taxonomic scope" value="Eukaryota"/>
</dbReference>
<dbReference type="GeneTree" id="ENSGT00940000161260"/>
<dbReference type="HOGENOM" id="CLU_116457_0_0_1"/>
<dbReference type="InParanoid" id="Q5VZ03"/>
<dbReference type="OMA" id="TDDYKHE"/>
<dbReference type="OrthoDB" id="409136at2759"/>
<dbReference type="PAN-GO" id="Q5VZ03">
    <property type="GO annotations" value="2 GO annotations based on evolutionary models"/>
</dbReference>
<dbReference type="PhylomeDB" id="Q5VZ03"/>
<dbReference type="TreeFam" id="TF331873"/>
<dbReference type="PathwayCommons" id="Q5VZ03"/>
<dbReference type="SignaLink" id="Q5VZ03"/>
<dbReference type="BioGRID-ORCS" id="158046">
    <property type="hits" value="7 hits in 1136 CRISPR screens"/>
</dbReference>
<dbReference type="ChiTaRS" id="NXNL2">
    <property type="organism name" value="human"/>
</dbReference>
<dbReference type="GenomeRNAi" id="158046"/>
<dbReference type="Pharos" id="Q5VZ03">
    <property type="development level" value="Tdark"/>
</dbReference>
<dbReference type="PRO" id="PR:Q5VZ03"/>
<dbReference type="Proteomes" id="UP000005640">
    <property type="component" value="Chromosome 9"/>
</dbReference>
<dbReference type="RNAct" id="Q5VZ03">
    <property type="molecule type" value="protein"/>
</dbReference>
<dbReference type="Bgee" id="ENSG00000130045">
    <property type="expression patterns" value="Expressed in right uterine tube and 100 other cell types or tissues"/>
</dbReference>
<dbReference type="ExpressionAtlas" id="Q5VZ03">
    <property type="expression patterns" value="baseline and differential"/>
</dbReference>
<dbReference type="GO" id="GO:0045494">
    <property type="term" value="P:photoreceptor cell maintenance"/>
    <property type="evidence" value="ECO:0007669"/>
    <property type="project" value="InterPro"/>
</dbReference>
<dbReference type="GO" id="GO:0007608">
    <property type="term" value="P:sensory perception of smell"/>
    <property type="evidence" value="ECO:0000318"/>
    <property type="project" value="GO_Central"/>
</dbReference>
<dbReference type="GO" id="GO:0007601">
    <property type="term" value="P:visual perception"/>
    <property type="evidence" value="ECO:0000318"/>
    <property type="project" value="GO_Central"/>
</dbReference>
<dbReference type="CDD" id="cd02964">
    <property type="entry name" value="TryX_like_family"/>
    <property type="match status" value="1"/>
</dbReference>
<dbReference type="Gene3D" id="3.40.30.10">
    <property type="entry name" value="Glutaredoxin"/>
    <property type="match status" value="1"/>
</dbReference>
<dbReference type="InterPro" id="IPR029519">
    <property type="entry name" value="RdCVF2"/>
</dbReference>
<dbReference type="InterPro" id="IPR012336">
    <property type="entry name" value="Thioredoxin-like_fold"/>
</dbReference>
<dbReference type="InterPro" id="IPR036249">
    <property type="entry name" value="Thioredoxin-like_sf"/>
</dbReference>
<dbReference type="PANTHER" id="PTHR46762">
    <property type="entry name" value="NUCLEOREDOXIN-LIKE PROTEIN 2"/>
    <property type="match status" value="1"/>
</dbReference>
<dbReference type="PANTHER" id="PTHR46762:SF1">
    <property type="entry name" value="NUCLEOREDOXIN-LIKE PROTEIN 2"/>
    <property type="match status" value="1"/>
</dbReference>
<dbReference type="Pfam" id="PF13905">
    <property type="entry name" value="Thioredoxin_8"/>
    <property type="match status" value="1"/>
</dbReference>
<dbReference type="SUPFAM" id="SSF52833">
    <property type="entry name" value="Thioredoxin-like"/>
    <property type="match status" value="1"/>
</dbReference>
<protein>
    <recommendedName>
        <fullName>Nucleoredoxin-like protein 2</fullName>
    </recommendedName>
    <alternativeName>
        <fullName>Rod-derived cone viability factor 2</fullName>
        <shortName>RdCVF2</shortName>
    </alternativeName>
</protein>
<name>NXNL2_HUMAN</name>
<feature type="chain" id="PRO_0000229735" description="Nucleoredoxin-like protein 2">
    <location>
        <begin position="1"/>
        <end position="156"/>
    </location>
</feature>
<feature type="domain" description="Thioredoxin">
    <location>
        <begin position="9"/>
        <end position="147"/>
    </location>
</feature>
<feature type="splice variant" id="VSP_039844" description="In isoform 2." evidence="3">
    <original>HELRKRYNVTAIPKLVIVKQNGEVITNKGRKQIRERGLACFQDWVEAADIFQNFSV</original>
    <variation>QRSLALLPRLECSGVILAHCNLCLLGSSDSLALAS</variation>
    <location>
        <begin position="101"/>
        <end position="156"/>
    </location>
</feature>
<feature type="sequence variant" id="VAR_025755" description="In dbSNP:rs17852066." evidence="2">
    <original>S</original>
    <variation>C</variation>
    <location>
        <position position="76"/>
    </location>
</feature>
<proteinExistence type="evidence at protein level"/>
<comment type="function">
    <text evidence="1">May be involved in the maintenance of both the function and the viability of sensory neurons, including photoreceptors and olfactory neurons.</text>
</comment>
<comment type="alternative products">
    <event type="alternative splicing"/>
    <isoform>
        <id>Q5VZ03-1</id>
        <name>1</name>
        <sequence type="displayed"/>
    </isoform>
    <isoform>
        <id>Q5VZ03-3</id>
        <name>2</name>
        <sequence type="described" ref="VSP_039844"/>
    </isoform>
</comment>
<comment type="similarity">
    <text evidence="4">Belongs to the nucleoredoxin family.</text>
</comment>